<keyword id="KW-0067">ATP-binding</keyword>
<keyword id="KW-0131">Cell cycle</keyword>
<keyword id="KW-0132">Cell division</keyword>
<keyword id="KW-0133">Cell shape</keyword>
<keyword id="KW-0961">Cell wall biogenesis/degradation</keyword>
<keyword id="KW-0963">Cytoplasm</keyword>
<keyword id="KW-0436">Ligase</keyword>
<keyword id="KW-0547">Nucleotide-binding</keyword>
<keyword id="KW-0573">Peptidoglycan synthesis</keyword>
<organism>
    <name type="scientific">Mycobacterium bovis (strain BCG / Pasteur 1173P2)</name>
    <dbReference type="NCBI Taxonomy" id="410289"/>
    <lineage>
        <taxon>Bacteria</taxon>
        <taxon>Bacillati</taxon>
        <taxon>Actinomycetota</taxon>
        <taxon>Actinomycetes</taxon>
        <taxon>Mycobacteriales</taxon>
        <taxon>Mycobacteriaceae</taxon>
        <taxon>Mycobacterium</taxon>
        <taxon>Mycobacterium tuberculosis complex</taxon>
    </lineage>
</organism>
<gene>
    <name evidence="1" type="primary">murC</name>
    <name type="ordered locus">BCG_2169c</name>
</gene>
<sequence>MSTEQLPPDLRRVHMVGIGGAGMSGIARILLDRGGLVSGSDAKESRGVHALRARGALIRIGHDASSLDLLPGGATAVVTTHAAIPKTNPELVEARRRGIPVVLRPAVLAKLMAGRTTLMVTGTHGKTTTTSMLIVALQHCGLDPSFAVGGELGEAGTNAHHGSGDCFVAEADESDGSLLQYTPHVAVITNIESDHLDFYGSVEAYVAVFDSFVERIVPGGALVVCTDDPGGAALAQRATELGIRVLRYGSVPGETMAATLVSWQQQGVGAVAHIRLASELATAQGPRVMRLSVPGRHMALNALGALLAAVQIGAPADEVLDGLAGFEGVRRRFELVGTCGVGKASVRVFDDYAHHPTEISATLAAARMVLEQGDGGRCMVVFQPHLYSRTKAFAAEFGRALNAADEVFVLDVYGAREQPLAGVSGASVAEHVTVPMRYVPDFSAVAQQVAAAASPGDVIVTMGAGDVTLLGPEILTALRVRANRSAPGRPGVLG</sequence>
<dbReference type="EC" id="6.3.2.8" evidence="1"/>
<dbReference type="EMBL" id="AM408590">
    <property type="protein sequence ID" value="CAL72157.1"/>
    <property type="molecule type" value="Genomic_DNA"/>
</dbReference>
<dbReference type="RefSeq" id="WP_003411159.1">
    <property type="nucleotide sequence ID" value="NC_008769.1"/>
</dbReference>
<dbReference type="SMR" id="A1KKJ5"/>
<dbReference type="KEGG" id="mbb:BCG_2169c"/>
<dbReference type="HOGENOM" id="CLU_028104_2_2_11"/>
<dbReference type="UniPathway" id="UPA00219"/>
<dbReference type="Proteomes" id="UP000001472">
    <property type="component" value="Chromosome"/>
</dbReference>
<dbReference type="GO" id="GO:0005737">
    <property type="term" value="C:cytoplasm"/>
    <property type="evidence" value="ECO:0007669"/>
    <property type="project" value="UniProtKB-SubCell"/>
</dbReference>
<dbReference type="GO" id="GO:0005524">
    <property type="term" value="F:ATP binding"/>
    <property type="evidence" value="ECO:0007669"/>
    <property type="project" value="UniProtKB-UniRule"/>
</dbReference>
<dbReference type="GO" id="GO:0008763">
    <property type="term" value="F:UDP-N-acetylmuramate-L-alanine ligase activity"/>
    <property type="evidence" value="ECO:0007669"/>
    <property type="project" value="UniProtKB-UniRule"/>
</dbReference>
<dbReference type="GO" id="GO:0051301">
    <property type="term" value="P:cell division"/>
    <property type="evidence" value="ECO:0007669"/>
    <property type="project" value="UniProtKB-KW"/>
</dbReference>
<dbReference type="GO" id="GO:0071555">
    <property type="term" value="P:cell wall organization"/>
    <property type="evidence" value="ECO:0007669"/>
    <property type="project" value="UniProtKB-KW"/>
</dbReference>
<dbReference type="GO" id="GO:0009252">
    <property type="term" value="P:peptidoglycan biosynthetic process"/>
    <property type="evidence" value="ECO:0007669"/>
    <property type="project" value="UniProtKB-UniRule"/>
</dbReference>
<dbReference type="GO" id="GO:0008360">
    <property type="term" value="P:regulation of cell shape"/>
    <property type="evidence" value="ECO:0007669"/>
    <property type="project" value="UniProtKB-KW"/>
</dbReference>
<dbReference type="FunFam" id="3.40.50.720:FF:000046">
    <property type="entry name" value="UDP-N-acetylmuramate--L-alanine ligase"/>
    <property type="match status" value="1"/>
</dbReference>
<dbReference type="FunFam" id="3.90.190.20:FF:000016">
    <property type="entry name" value="UDP-N-acetylmuramate--L-alanine ligase"/>
    <property type="match status" value="1"/>
</dbReference>
<dbReference type="Gene3D" id="3.90.190.20">
    <property type="entry name" value="Mur ligase, C-terminal domain"/>
    <property type="match status" value="1"/>
</dbReference>
<dbReference type="Gene3D" id="3.40.1190.10">
    <property type="entry name" value="Mur-like, catalytic domain"/>
    <property type="match status" value="1"/>
</dbReference>
<dbReference type="Gene3D" id="3.40.50.720">
    <property type="entry name" value="NAD(P)-binding Rossmann-like Domain"/>
    <property type="match status" value="1"/>
</dbReference>
<dbReference type="HAMAP" id="MF_00046">
    <property type="entry name" value="MurC"/>
    <property type="match status" value="1"/>
</dbReference>
<dbReference type="InterPro" id="IPR036565">
    <property type="entry name" value="Mur-like_cat_sf"/>
</dbReference>
<dbReference type="InterPro" id="IPR004101">
    <property type="entry name" value="Mur_ligase_C"/>
</dbReference>
<dbReference type="InterPro" id="IPR036615">
    <property type="entry name" value="Mur_ligase_C_dom_sf"/>
</dbReference>
<dbReference type="InterPro" id="IPR013221">
    <property type="entry name" value="Mur_ligase_cen"/>
</dbReference>
<dbReference type="InterPro" id="IPR000713">
    <property type="entry name" value="Mur_ligase_N"/>
</dbReference>
<dbReference type="InterPro" id="IPR050061">
    <property type="entry name" value="MurCDEF_pg_biosynth"/>
</dbReference>
<dbReference type="InterPro" id="IPR005758">
    <property type="entry name" value="UDP-N-AcMur_Ala_ligase_MurC"/>
</dbReference>
<dbReference type="NCBIfam" id="TIGR01082">
    <property type="entry name" value="murC"/>
    <property type="match status" value="1"/>
</dbReference>
<dbReference type="PANTHER" id="PTHR43445:SF3">
    <property type="entry name" value="UDP-N-ACETYLMURAMATE--L-ALANINE LIGASE"/>
    <property type="match status" value="1"/>
</dbReference>
<dbReference type="PANTHER" id="PTHR43445">
    <property type="entry name" value="UDP-N-ACETYLMURAMATE--L-ALANINE LIGASE-RELATED"/>
    <property type="match status" value="1"/>
</dbReference>
<dbReference type="Pfam" id="PF01225">
    <property type="entry name" value="Mur_ligase"/>
    <property type="match status" value="1"/>
</dbReference>
<dbReference type="Pfam" id="PF02875">
    <property type="entry name" value="Mur_ligase_C"/>
    <property type="match status" value="1"/>
</dbReference>
<dbReference type="Pfam" id="PF08245">
    <property type="entry name" value="Mur_ligase_M"/>
    <property type="match status" value="1"/>
</dbReference>
<dbReference type="SUPFAM" id="SSF51984">
    <property type="entry name" value="MurCD N-terminal domain"/>
    <property type="match status" value="1"/>
</dbReference>
<dbReference type="SUPFAM" id="SSF53623">
    <property type="entry name" value="MurD-like peptide ligases, catalytic domain"/>
    <property type="match status" value="1"/>
</dbReference>
<dbReference type="SUPFAM" id="SSF53244">
    <property type="entry name" value="MurD-like peptide ligases, peptide-binding domain"/>
    <property type="match status" value="1"/>
</dbReference>
<feature type="chain" id="PRO_1000004371" description="UDP-N-acetylmuramate--L-alanine ligase">
    <location>
        <begin position="1"/>
        <end position="494"/>
    </location>
</feature>
<feature type="binding site" evidence="1">
    <location>
        <begin position="122"/>
        <end position="128"/>
    </location>
    <ligand>
        <name>ATP</name>
        <dbReference type="ChEBI" id="CHEBI:30616"/>
    </ligand>
</feature>
<name>MURC_MYCBP</name>
<accession>A1KKJ5</accession>
<evidence type="ECO:0000255" key="1">
    <source>
        <dbReference type="HAMAP-Rule" id="MF_00046"/>
    </source>
</evidence>
<protein>
    <recommendedName>
        <fullName evidence="1">UDP-N-acetylmuramate--L-alanine ligase</fullName>
        <ecNumber evidence="1">6.3.2.8</ecNumber>
    </recommendedName>
    <alternativeName>
        <fullName evidence="1">UDP-N-acetylmuramoyl-L-alanine synthetase</fullName>
    </alternativeName>
</protein>
<reference key="1">
    <citation type="journal article" date="2007" name="Proc. Natl. Acad. Sci. U.S.A.">
        <title>Genome plasticity of BCG and impact on vaccine efficacy.</title>
        <authorList>
            <person name="Brosch R."/>
            <person name="Gordon S.V."/>
            <person name="Garnier T."/>
            <person name="Eiglmeier K."/>
            <person name="Frigui W."/>
            <person name="Valenti P."/>
            <person name="Dos Santos S."/>
            <person name="Duthoy S."/>
            <person name="Lacroix C."/>
            <person name="Garcia-Pelayo C."/>
            <person name="Inwald J.K."/>
            <person name="Golby P."/>
            <person name="Garcia J.N."/>
            <person name="Hewinson R.G."/>
            <person name="Behr M.A."/>
            <person name="Quail M.A."/>
            <person name="Churcher C."/>
            <person name="Barrell B.G."/>
            <person name="Parkhill J."/>
            <person name="Cole S.T."/>
        </authorList>
    </citation>
    <scope>NUCLEOTIDE SEQUENCE [LARGE SCALE GENOMIC DNA]</scope>
    <source>
        <strain>BCG / Pasteur 1173P2</strain>
    </source>
</reference>
<comment type="function">
    <text evidence="1">Cell wall formation.</text>
</comment>
<comment type="catalytic activity">
    <reaction evidence="1">
        <text>UDP-N-acetyl-alpha-D-muramate + L-alanine + ATP = UDP-N-acetyl-alpha-D-muramoyl-L-alanine + ADP + phosphate + H(+)</text>
        <dbReference type="Rhea" id="RHEA:23372"/>
        <dbReference type="ChEBI" id="CHEBI:15378"/>
        <dbReference type="ChEBI" id="CHEBI:30616"/>
        <dbReference type="ChEBI" id="CHEBI:43474"/>
        <dbReference type="ChEBI" id="CHEBI:57972"/>
        <dbReference type="ChEBI" id="CHEBI:70757"/>
        <dbReference type="ChEBI" id="CHEBI:83898"/>
        <dbReference type="ChEBI" id="CHEBI:456216"/>
        <dbReference type="EC" id="6.3.2.8"/>
    </reaction>
</comment>
<comment type="pathway">
    <text evidence="1">Cell wall biogenesis; peptidoglycan biosynthesis.</text>
</comment>
<comment type="subcellular location">
    <subcellularLocation>
        <location evidence="1">Cytoplasm</location>
    </subcellularLocation>
</comment>
<comment type="similarity">
    <text evidence="1">Belongs to the MurCDEF family.</text>
</comment>
<proteinExistence type="inferred from homology"/>